<keyword id="KW-0067">ATP-binding</keyword>
<keyword id="KW-0997">Cell inner membrane</keyword>
<keyword id="KW-1003">Cell membrane</keyword>
<keyword id="KW-0472">Membrane</keyword>
<keyword id="KW-0547">Nucleotide-binding</keyword>
<keyword id="KW-0762">Sugar transport</keyword>
<keyword id="KW-1278">Translocase</keyword>
<keyword id="KW-0813">Transport</keyword>
<protein>
    <recommendedName>
        <fullName evidence="1">sn-glycerol-3-phosphate import ATP-binding protein UgpC</fullName>
        <ecNumber evidence="1">7.6.2.10</ecNumber>
    </recommendedName>
</protein>
<organism>
    <name type="scientific">Rhodopseudomonas palustris (strain BisB5)</name>
    <dbReference type="NCBI Taxonomy" id="316057"/>
    <lineage>
        <taxon>Bacteria</taxon>
        <taxon>Pseudomonadati</taxon>
        <taxon>Pseudomonadota</taxon>
        <taxon>Alphaproteobacteria</taxon>
        <taxon>Hyphomicrobiales</taxon>
        <taxon>Nitrobacteraceae</taxon>
        <taxon>Rhodopseudomonas</taxon>
    </lineage>
</organism>
<feature type="chain" id="PRO_0000289775" description="sn-glycerol-3-phosphate import ATP-binding protein UgpC">
    <location>
        <begin position="1"/>
        <end position="364"/>
    </location>
</feature>
<feature type="domain" description="ABC transporter" evidence="1">
    <location>
        <begin position="4"/>
        <end position="235"/>
    </location>
</feature>
<feature type="binding site" evidence="1">
    <location>
        <begin position="37"/>
        <end position="44"/>
    </location>
    <ligand>
        <name>ATP</name>
        <dbReference type="ChEBI" id="CHEBI:30616"/>
    </ligand>
</feature>
<evidence type="ECO:0000255" key="1">
    <source>
        <dbReference type="HAMAP-Rule" id="MF_01727"/>
    </source>
</evidence>
<dbReference type="EC" id="7.6.2.10" evidence="1"/>
<dbReference type="EMBL" id="CP000283">
    <property type="protein sequence ID" value="ABE37423.1"/>
    <property type="molecule type" value="Genomic_DNA"/>
</dbReference>
<dbReference type="SMR" id="Q13ER6"/>
<dbReference type="STRING" id="316057.RPD_0183"/>
<dbReference type="KEGG" id="rpd:RPD_0183"/>
<dbReference type="eggNOG" id="COG3842">
    <property type="taxonomic scope" value="Bacteria"/>
</dbReference>
<dbReference type="HOGENOM" id="CLU_000604_1_1_5"/>
<dbReference type="BioCyc" id="RPAL316057:RPD_RS00925-MONOMER"/>
<dbReference type="Proteomes" id="UP000001818">
    <property type="component" value="Chromosome"/>
</dbReference>
<dbReference type="GO" id="GO:0055052">
    <property type="term" value="C:ATP-binding cassette (ABC) transporter complex, substrate-binding subunit-containing"/>
    <property type="evidence" value="ECO:0007669"/>
    <property type="project" value="TreeGrafter"/>
</dbReference>
<dbReference type="GO" id="GO:0015430">
    <property type="term" value="F:ABC-type glycerol-3-phosphate transporter activity"/>
    <property type="evidence" value="ECO:0007669"/>
    <property type="project" value="UniProtKB-EC"/>
</dbReference>
<dbReference type="GO" id="GO:0005524">
    <property type="term" value="F:ATP binding"/>
    <property type="evidence" value="ECO:0007669"/>
    <property type="project" value="UniProtKB-KW"/>
</dbReference>
<dbReference type="GO" id="GO:0016887">
    <property type="term" value="F:ATP hydrolysis activity"/>
    <property type="evidence" value="ECO:0007669"/>
    <property type="project" value="InterPro"/>
</dbReference>
<dbReference type="GO" id="GO:0008643">
    <property type="term" value="P:carbohydrate transport"/>
    <property type="evidence" value="ECO:0007669"/>
    <property type="project" value="InterPro"/>
</dbReference>
<dbReference type="GO" id="GO:0001407">
    <property type="term" value="P:glycerophosphodiester transmembrane transport"/>
    <property type="evidence" value="ECO:0007669"/>
    <property type="project" value="TreeGrafter"/>
</dbReference>
<dbReference type="CDD" id="cd03301">
    <property type="entry name" value="ABC_MalK_N"/>
    <property type="match status" value="1"/>
</dbReference>
<dbReference type="FunFam" id="3.40.50.300:FF:000042">
    <property type="entry name" value="Maltose/maltodextrin ABC transporter, ATP-binding protein"/>
    <property type="match status" value="1"/>
</dbReference>
<dbReference type="Gene3D" id="2.40.50.100">
    <property type="match status" value="1"/>
</dbReference>
<dbReference type="Gene3D" id="2.40.50.140">
    <property type="entry name" value="Nucleic acid-binding proteins"/>
    <property type="match status" value="1"/>
</dbReference>
<dbReference type="Gene3D" id="3.40.50.300">
    <property type="entry name" value="P-loop containing nucleotide triphosphate hydrolases"/>
    <property type="match status" value="1"/>
</dbReference>
<dbReference type="InterPro" id="IPR003593">
    <property type="entry name" value="AAA+_ATPase"/>
</dbReference>
<dbReference type="InterPro" id="IPR003439">
    <property type="entry name" value="ABC_transporter-like_ATP-bd"/>
</dbReference>
<dbReference type="InterPro" id="IPR017871">
    <property type="entry name" value="ABC_transporter-like_CS"/>
</dbReference>
<dbReference type="InterPro" id="IPR015855">
    <property type="entry name" value="ABC_transpr_MalK-like"/>
</dbReference>
<dbReference type="InterPro" id="IPR047641">
    <property type="entry name" value="ABC_transpr_MalK/UgpC-like"/>
</dbReference>
<dbReference type="InterPro" id="IPR008995">
    <property type="entry name" value="Mo/tungstate-bd_C_term_dom"/>
</dbReference>
<dbReference type="InterPro" id="IPR012340">
    <property type="entry name" value="NA-bd_OB-fold"/>
</dbReference>
<dbReference type="InterPro" id="IPR027417">
    <property type="entry name" value="P-loop_NTPase"/>
</dbReference>
<dbReference type="NCBIfam" id="NF008653">
    <property type="entry name" value="PRK11650.1"/>
    <property type="match status" value="1"/>
</dbReference>
<dbReference type="PANTHER" id="PTHR43875">
    <property type="entry name" value="MALTODEXTRIN IMPORT ATP-BINDING PROTEIN MSMX"/>
    <property type="match status" value="1"/>
</dbReference>
<dbReference type="PANTHER" id="PTHR43875:SF12">
    <property type="entry name" value="SN-GLYCEROL-3-PHOSPHATE IMPORT ATP-BINDING PROTEIN UGPC"/>
    <property type="match status" value="1"/>
</dbReference>
<dbReference type="Pfam" id="PF00005">
    <property type="entry name" value="ABC_tran"/>
    <property type="match status" value="1"/>
</dbReference>
<dbReference type="SMART" id="SM00382">
    <property type="entry name" value="AAA"/>
    <property type="match status" value="1"/>
</dbReference>
<dbReference type="SUPFAM" id="SSF50331">
    <property type="entry name" value="MOP-like"/>
    <property type="match status" value="1"/>
</dbReference>
<dbReference type="SUPFAM" id="SSF52540">
    <property type="entry name" value="P-loop containing nucleoside triphosphate hydrolases"/>
    <property type="match status" value="1"/>
</dbReference>
<dbReference type="PROSITE" id="PS00211">
    <property type="entry name" value="ABC_TRANSPORTER_1"/>
    <property type="match status" value="1"/>
</dbReference>
<dbReference type="PROSITE" id="PS50893">
    <property type="entry name" value="ABC_TRANSPORTER_2"/>
    <property type="match status" value="1"/>
</dbReference>
<dbReference type="PROSITE" id="PS51315">
    <property type="entry name" value="UGPC"/>
    <property type="match status" value="1"/>
</dbReference>
<reference key="1">
    <citation type="submission" date="2006-03" db="EMBL/GenBank/DDBJ databases">
        <title>Complete sequence of Rhodopseudomonas palustris BisB5.</title>
        <authorList>
            <consortium name="US DOE Joint Genome Institute"/>
            <person name="Copeland A."/>
            <person name="Lucas S."/>
            <person name="Lapidus A."/>
            <person name="Barry K."/>
            <person name="Detter J.C."/>
            <person name="Glavina del Rio T."/>
            <person name="Hammon N."/>
            <person name="Israni S."/>
            <person name="Dalin E."/>
            <person name="Tice H."/>
            <person name="Pitluck S."/>
            <person name="Chain P."/>
            <person name="Malfatti S."/>
            <person name="Shin M."/>
            <person name="Vergez L."/>
            <person name="Schmutz J."/>
            <person name="Larimer F."/>
            <person name="Land M."/>
            <person name="Hauser L."/>
            <person name="Pelletier D.A."/>
            <person name="Kyrpides N."/>
            <person name="Lykidis A."/>
            <person name="Oda Y."/>
            <person name="Harwood C.S."/>
            <person name="Richardson P."/>
        </authorList>
    </citation>
    <scope>NUCLEOTIDE SEQUENCE [LARGE SCALE GENOMIC DNA]</scope>
    <source>
        <strain>BisB5</strain>
    </source>
</reference>
<gene>
    <name evidence="1" type="primary">ugpC</name>
    <name type="ordered locus">RPD_0183</name>
</gene>
<accession>Q13ER6</accession>
<name>UGPC_RHOPS</name>
<comment type="function">
    <text evidence="1">Part of the ABC transporter complex UgpBAEC involved in sn-glycerol-3-phosphate (G3P) import. Responsible for energy coupling to the transport system.</text>
</comment>
<comment type="catalytic activity">
    <reaction evidence="1">
        <text>sn-glycerol 3-phosphate(out) + ATP + H2O = sn-glycerol 3-phosphate(in) + ADP + phosphate + H(+)</text>
        <dbReference type="Rhea" id="RHEA:21668"/>
        <dbReference type="ChEBI" id="CHEBI:15377"/>
        <dbReference type="ChEBI" id="CHEBI:15378"/>
        <dbReference type="ChEBI" id="CHEBI:30616"/>
        <dbReference type="ChEBI" id="CHEBI:43474"/>
        <dbReference type="ChEBI" id="CHEBI:57597"/>
        <dbReference type="ChEBI" id="CHEBI:456216"/>
        <dbReference type="EC" id="7.6.2.10"/>
    </reaction>
</comment>
<comment type="subunit">
    <text evidence="1">The complex is composed of two ATP-binding proteins (UgpC), two transmembrane proteins (UgpA and UgpE) and a solute-binding protein (UgpB).</text>
</comment>
<comment type="subcellular location">
    <subcellularLocation>
        <location evidence="1">Cell inner membrane</location>
        <topology evidence="1">Peripheral membrane protein</topology>
    </subcellularLocation>
</comment>
<comment type="similarity">
    <text evidence="1">Belongs to the ABC transporter superfamily. sn-glycerol-3-phosphate importer (TC 3.A.1.1.3) family.</text>
</comment>
<sequence length="364" mass="39192">MANVVLRNVRKTYPGGFEAIKGVDLEVGDGQFCVLVGPSGCGKSTLLRMVAGLETITAGEIDIGGRVVNDVEPADRDIAMVFQNYALYPHMSVYNNMAYGLRNRGMAKPEIEARVQEAARILEIGAMLDRKPRQLSGGQRQRVAMGRAIVRQPKVFLFDEPLSNLDAKLRVAMRVEIRKLQRRLSTTAIYVTHDQLEAMTLADILVVMNAGQVEQIGSPLDVYAKPATTFVASFIGAPPMNLIPLDAEGVRARFGGAVTEAGVLGVRPEDLAISSEPPAPGGLTLDLAVEAIERVGPETFVYGTRSPGGDLAAISSKPGELPPDEIIIRIPGQEAPAIGQRISVVALRHNLHLFSADGRRRIAV</sequence>
<proteinExistence type="inferred from homology"/>